<comment type="function">
    <text evidence="1">Catalyzes the conversion of dihydroorotate to orotate with NAD(+) as electron acceptor.</text>
</comment>
<comment type="catalytic activity">
    <reaction>
        <text>(S)-dihydroorotate + NAD(+) = orotate + NADH + H(+)</text>
        <dbReference type="Rhea" id="RHEA:13513"/>
        <dbReference type="ChEBI" id="CHEBI:15378"/>
        <dbReference type="ChEBI" id="CHEBI:30839"/>
        <dbReference type="ChEBI" id="CHEBI:30864"/>
        <dbReference type="ChEBI" id="CHEBI:57540"/>
        <dbReference type="ChEBI" id="CHEBI:57945"/>
        <dbReference type="EC" id="1.3.1.14"/>
    </reaction>
</comment>
<comment type="cofactor">
    <cofactor evidence="1">
        <name>FMN</name>
        <dbReference type="ChEBI" id="CHEBI:58210"/>
    </cofactor>
    <text evidence="1">Binds 1 FMN per subunit.</text>
</comment>
<comment type="pathway">
    <text>Pyrimidine metabolism; UMP biosynthesis via de novo pathway; orotate from (S)-dihydroorotate (NAD(+) route): step 1/1.</text>
</comment>
<comment type="subunit">
    <text evidence="1">Heterotetramer of 2 PyrK and 2 PyrD type B subunits.</text>
</comment>
<comment type="subcellular location">
    <subcellularLocation>
        <location evidence="1">Cytoplasm</location>
    </subcellularLocation>
</comment>
<comment type="similarity">
    <text evidence="2">Belongs to the dihydroorotate dehydrogenase family. Type 1 subfamily.</text>
</comment>
<dbReference type="EC" id="1.3.1.14"/>
<dbReference type="EMBL" id="CP000227">
    <property type="protein sequence ID" value="ACM14098.1"/>
    <property type="molecule type" value="Genomic_DNA"/>
</dbReference>
<dbReference type="SMR" id="B9IVW1"/>
<dbReference type="KEGG" id="bcq:BCQ_3670"/>
<dbReference type="HOGENOM" id="CLU_042042_0_0_9"/>
<dbReference type="UniPathway" id="UPA00070">
    <property type="reaction ID" value="UER00945"/>
</dbReference>
<dbReference type="Proteomes" id="UP000000441">
    <property type="component" value="Chromosome"/>
</dbReference>
<dbReference type="GO" id="GO:0005737">
    <property type="term" value="C:cytoplasm"/>
    <property type="evidence" value="ECO:0007669"/>
    <property type="project" value="UniProtKB-SubCell"/>
</dbReference>
<dbReference type="GO" id="GO:0004589">
    <property type="term" value="F:dihydroorotate dehydrogenase (NAD+) activity"/>
    <property type="evidence" value="ECO:0007669"/>
    <property type="project" value="UniProtKB-EC"/>
</dbReference>
<dbReference type="GO" id="GO:0006207">
    <property type="term" value="P:'de novo' pyrimidine nucleobase biosynthetic process"/>
    <property type="evidence" value="ECO:0007669"/>
    <property type="project" value="InterPro"/>
</dbReference>
<dbReference type="GO" id="GO:0044205">
    <property type="term" value="P:'de novo' UMP biosynthetic process"/>
    <property type="evidence" value="ECO:0007669"/>
    <property type="project" value="UniProtKB-UniRule"/>
</dbReference>
<dbReference type="CDD" id="cd04740">
    <property type="entry name" value="DHOD_1B_like"/>
    <property type="match status" value="1"/>
</dbReference>
<dbReference type="FunFam" id="3.20.20.70:FF:000069">
    <property type="entry name" value="Dihydroorotate dehydrogenase"/>
    <property type="match status" value="1"/>
</dbReference>
<dbReference type="Gene3D" id="3.20.20.70">
    <property type="entry name" value="Aldolase class I"/>
    <property type="match status" value="1"/>
</dbReference>
<dbReference type="HAMAP" id="MF_00224">
    <property type="entry name" value="DHO_dh_type1"/>
    <property type="match status" value="1"/>
</dbReference>
<dbReference type="InterPro" id="IPR013785">
    <property type="entry name" value="Aldolase_TIM"/>
</dbReference>
<dbReference type="InterPro" id="IPR050074">
    <property type="entry name" value="DHO_dehydrogenase"/>
</dbReference>
<dbReference type="InterPro" id="IPR033888">
    <property type="entry name" value="DHOD_1B"/>
</dbReference>
<dbReference type="InterPro" id="IPR024920">
    <property type="entry name" value="Dihydroorotate_DH_1"/>
</dbReference>
<dbReference type="InterPro" id="IPR012135">
    <property type="entry name" value="Dihydroorotate_DH_1_2"/>
</dbReference>
<dbReference type="InterPro" id="IPR005720">
    <property type="entry name" value="Dihydroorotate_DH_cat"/>
</dbReference>
<dbReference type="InterPro" id="IPR001295">
    <property type="entry name" value="Dihydroorotate_DH_CS"/>
</dbReference>
<dbReference type="InterPro" id="IPR049622">
    <property type="entry name" value="Dihydroorotate_DH_I"/>
</dbReference>
<dbReference type="NCBIfam" id="NF005574">
    <property type="entry name" value="PRK07259.1"/>
    <property type="match status" value="1"/>
</dbReference>
<dbReference type="NCBIfam" id="TIGR01037">
    <property type="entry name" value="pyrD_sub1_fam"/>
    <property type="match status" value="1"/>
</dbReference>
<dbReference type="PANTHER" id="PTHR48109:SF1">
    <property type="entry name" value="DIHYDROOROTATE DEHYDROGENASE (FUMARATE)"/>
    <property type="match status" value="1"/>
</dbReference>
<dbReference type="PANTHER" id="PTHR48109">
    <property type="entry name" value="DIHYDROOROTATE DEHYDROGENASE (QUINONE), MITOCHONDRIAL-RELATED"/>
    <property type="match status" value="1"/>
</dbReference>
<dbReference type="Pfam" id="PF01180">
    <property type="entry name" value="DHO_dh"/>
    <property type="match status" value="1"/>
</dbReference>
<dbReference type="PIRSF" id="PIRSF000164">
    <property type="entry name" value="DHO_oxidase"/>
    <property type="match status" value="1"/>
</dbReference>
<dbReference type="SUPFAM" id="SSF51395">
    <property type="entry name" value="FMN-linked oxidoreductases"/>
    <property type="match status" value="1"/>
</dbReference>
<dbReference type="PROSITE" id="PS00911">
    <property type="entry name" value="DHODEHASE_1"/>
    <property type="match status" value="1"/>
</dbReference>
<dbReference type="PROSITE" id="PS00912">
    <property type="entry name" value="DHODEHASE_2"/>
    <property type="match status" value="1"/>
</dbReference>
<keyword id="KW-0963">Cytoplasm</keyword>
<keyword id="KW-0285">Flavoprotein</keyword>
<keyword id="KW-0288">FMN</keyword>
<keyword id="KW-0520">NAD</keyword>
<keyword id="KW-0560">Oxidoreductase</keyword>
<keyword id="KW-0665">Pyrimidine biosynthesis</keyword>
<proteinExistence type="inferred from homology"/>
<sequence>MNRLQVELPGLSLKNPIIPASGCFGFGREYAQFYDLSVLGSIMIKATTEQPRYGNPTPRVAETPGGMLNAIGLQNPGLEKVMNSELPWLEQFDLPIIANVAGSQAEDYVAVAKEISKAPNVHALELNISCPNVKTGGIAFGTNPEIAADLTKRVKEVSEVPVYVKLSPNVANIVEIAKAIENAGADGLTMINTLLGMRLDLKTAKPILANRTGGLSGPAIKPVAIRMVHEVSQAVNIPIIGMGGIETAEDVIEFFYAGASAVAVGTANFIDPFVCPTIIEELPALLDELGFDHISECQGRSWKQTCHSR</sequence>
<protein>
    <recommendedName>
        <fullName>Dihydroorotate dehydrogenase B (NAD(+)), catalytic subunit</fullName>
        <shortName>DHOD B</shortName>
        <shortName>DHODase B</shortName>
        <shortName>DHOdehase B</shortName>
        <ecNumber>1.3.1.14</ecNumber>
    </recommendedName>
    <alternativeName>
        <fullName>Dihydroorotate oxidase B</fullName>
    </alternativeName>
    <alternativeName>
        <fullName>Orotate reductase (NADH)</fullName>
    </alternativeName>
</protein>
<accession>B9IVW1</accession>
<name>PYRDB_BACCQ</name>
<feature type="chain" id="PRO_1000195046" description="Dihydroorotate dehydrogenase B (NAD(+)), catalytic subunit">
    <location>
        <begin position="1"/>
        <end position="309"/>
    </location>
</feature>
<feature type="active site" description="Nucleophile">
    <location>
        <position position="130"/>
    </location>
</feature>
<feature type="binding site" evidence="1">
    <location>
        <position position="21"/>
    </location>
    <ligand>
        <name>FMN</name>
        <dbReference type="ChEBI" id="CHEBI:58210"/>
    </ligand>
</feature>
<feature type="binding site" evidence="1">
    <location>
        <begin position="45"/>
        <end position="46"/>
    </location>
    <ligand>
        <name>FMN</name>
        <dbReference type="ChEBI" id="CHEBI:58210"/>
    </ligand>
</feature>
<feature type="binding site" evidence="1">
    <location>
        <position position="45"/>
    </location>
    <ligand>
        <name>substrate</name>
    </ligand>
</feature>
<feature type="binding site" evidence="1">
    <location>
        <begin position="69"/>
        <end position="73"/>
    </location>
    <ligand>
        <name>substrate</name>
    </ligand>
</feature>
<feature type="binding site" evidence="1">
    <location>
        <position position="99"/>
    </location>
    <ligand>
        <name>FMN</name>
        <dbReference type="ChEBI" id="CHEBI:58210"/>
    </ligand>
</feature>
<feature type="binding site" evidence="1">
    <location>
        <position position="127"/>
    </location>
    <ligand>
        <name>FMN</name>
        <dbReference type="ChEBI" id="CHEBI:58210"/>
    </ligand>
</feature>
<feature type="binding site" evidence="1">
    <location>
        <position position="127"/>
    </location>
    <ligand>
        <name>substrate</name>
    </ligand>
</feature>
<feature type="binding site" evidence="1">
    <location>
        <position position="165"/>
    </location>
    <ligand>
        <name>FMN</name>
        <dbReference type="ChEBI" id="CHEBI:58210"/>
    </ligand>
</feature>
<feature type="binding site" evidence="1">
    <location>
        <position position="191"/>
    </location>
    <ligand>
        <name>FMN</name>
        <dbReference type="ChEBI" id="CHEBI:58210"/>
    </ligand>
</feature>
<feature type="binding site" evidence="1">
    <location>
        <begin position="192"/>
        <end position="193"/>
    </location>
    <ligand>
        <name>substrate</name>
    </ligand>
</feature>
<feature type="binding site" evidence="1">
    <location>
        <position position="217"/>
    </location>
    <ligand>
        <name>FMN</name>
        <dbReference type="ChEBI" id="CHEBI:58210"/>
    </ligand>
</feature>
<feature type="binding site" evidence="1">
    <location>
        <begin position="243"/>
        <end position="244"/>
    </location>
    <ligand>
        <name>FMN</name>
        <dbReference type="ChEBI" id="CHEBI:58210"/>
    </ligand>
</feature>
<feature type="binding site" evidence="1">
    <location>
        <begin position="265"/>
        <end position="266"/>
    </location>
    <ligand>
        <name>FMN</name>
        <dbReference type="ChEBI" id="CHEBI:58210"/>
    </ligand>
</feature>
<gene>
    <name type="primary">pyrD</name>
    <name type="ordered locus">BCQ_3670</name>
</gene>
<evidence type="ECO:0000250" key="1"/>
<evidence type="ECO:0000305" key="2"/>
<organism>
    <name type="scientific">Bacillus cereus (strain Q1)</name>
    <dbReference type="NCBI Taxonomy" id="361100"/>
    <lineage>
        <taxon>Bacteria</taxon>
        <taxon>Bacillati</taxon>
        <taxon>Bacillota</taxon>
        <taxon>Bacilli</taxon>
        <taxon>Bacillales</taxon>
        <taxon>Bacillaceae</taxon>
        <taxon>Bacillus</taxon>
        <taxon>Bacillus cereus group</taxon>
    </lineage>
</organism>
<reference key="1">
    <citation type="journal article" date="2009" name="J. Bacteriol.">
        <title>Complete genome sequence of the extremophilic Bacillus cereus strain Q1 with industrial applications.</title>
        <authorList>
            <person name="Xiong Z."/>
            <person name="Jiang Y."/>
            <person name="Qi D."/>
            <person name="Lu H."/>
            <person name="Yang F."/>
            <person name="Yang J."/>
            <person name="Chen L."/>
            <person name="Sun L."/>
            <person name="Xu X."/>
            <person name="Xue Y."/>
            <person name="Zhu Y."/>
            <person name="Jin Q."/>
        </authorList>
    </citation>
    <scope>NUCLEOTIDE SEQUENCE [LARGE SCALE GENOMIC DNA]</scope>
    <source>
        <strain>Q1</strain>
    </source>
</reference>